<dbReference type="EC" id="2.1.1.242" evidence="1"/>
<dbReference type="EMBL" id="BX572604">
    <property type="protein sequence ID" value="CAE28928.1"/>
    <property type="molecule type" value="Genomic_DNA"/>
</dbReference>
<dbReference type="RefSeq" id="WP_011159027.1">
    <property type="nucleotide sequence ID" value="NZ_CP116810.1"/>
</dbReference>
<dbReference type="SMR" id="Q6N453"/>
<dbReference type="STRING" id="258594.RPA3487"/>
<dbReference type="GeneID" id="66894585"/>
<dbReference type="eggNOG" id="COG0500">
    <property type="taxonomic scope" value="Bacteria"/>
</dbReference>
<dbReference type="HOGENOM" id="CLU_076324_0_0_5"/>
<dbReference type="PhylomeDB" id="Q6N453"/>
<dbReference type="GO" id="GO:0005737">
    <property type="term" value="C:cytoplasm"/>
    <property type="evidence" value="ECO:0007669"/>
    <property type="project" value="UniProtKB-SubCell"/>
</dbReference>
<dbReference type="GO" id="GO:0008990">
    <property type="term" value="F:rRNA (guanine-N2-)-methyltransferase activity"/>
    <property type="evidence" value="ECO:0007669"/>
    <property type="project" value="UniProtKB-UniRule"/>
</dbReference>
<dbReference type="Gene3D" id="3.40.50.150">
    <property type="entry name" value="Vaccinia Virus protein VP39"/>
    <property type="match status" value="1"/>
</dbReference>
<dbReference type="HAMAP" id="MF_01523">
    <property type="entry name" value="16SrRNA_methyltr_J"/>
    <property type="match status" value="1"/>
</dbReference>
<dbReference type="InterPro" id="IPR007536">
    <property type="entry name" value="16SrRNA_methylTrfase_J"/>
</dbReference>
<dbReference type="InterPro" id="IPR029063">
    <property type="entry name" value="SAM-dependent_MTases_sf"/>
</dbReference>
<dbReference type="PANTHER" id="PTHR36112">
    <property type="entry name" value="RIBOSOMAL RNA SMALL SUBUNIT METHYLTRANSFERASE J"/>
    <property type="match status" value="1"/>
</dbReference>
<dbReference type="PANTHER" id="PTHR36112:SF1">
    <property type="entry name" value="RIBOSOMAL RNA SMALL SUBUNIT METHYLTRANSFERASE J"/>
    <property type="match status" value="1"/>
</dbReference>
<dbReference type="Pfam" id="PF04445">
    <property type="entry name" value="SAM_MT"/>
    <property type="match status" value="1"/>
</dbReference>
<dbReference type="SUPFAM" id="SSF53335">
    <property type="entry name" value="S-adenosyl-L-methionine-dependent methyltransferases"/>
    <property type="match status" value="1"/>
</dbReference>
<accession>Q6N453</accession>
<protein>
    <recommendedName>
        <fullName evidence="1">Ribosomal RNA small subunit methyltransferase J</fullName>
        <ecNumber evidence="1">2.1.1.242</ecNumber>
    </recommendedName>
    <alternativeName>
        <fullName evidence="1">16S rRNA m2G1516 methyltransferase</fullName>
    </alternativeName>
    <alternativeName>
        <fullName evidence="1">rRNA (guanine-N(2)-)-methyltransferase</fullName>
    </alternativeName>
</protein>
<name>RSMJ_RHOPA</name>
<feature type="chain" id="PRO_0000212087" description="Ribosomal RNA small subunit methyltransferase J">
    <location>
        <begin position="1"/>
        <end position="204"/>
    </location>
</feature>
<feature type="binding site" evidence="1">
    <location>
        <begin position="55"/>
        <end position="56"/>
    </location>
    <ligand>
        <name>S-adenosyl-L-methionine</name>
        <dbReference type="ChEBI" id="CHEBI:59789"/>
    </ligand>
</feature>
<feature type="binding site" evidence="1">
    <location>
        <begin position="71"/>
        <end position="72"/>
    </location>
    <ligand>
        <name>S-adenosyl-L-methionine</name>
        <dbReference type="ChEBI" id="CHEBI:59789"/>
    </ligand>
</feature>
<feature type="binding site" evidence="1">
    <location>
        <position position="123"/>
    </location>
    <ligand>
        <name>S-adenosyl-L-methionine</name>
        <dbReference type="ChEBI" id="CHEBI:59789"/>
    </ligand>
</feature>
<keyword id="KW-0963">Cytoplasm</keyword>
<keyword id="KW-0489">Methyltransferase</keyword>
<keyword id="KW-0698">rRNA processing</keyword>
<keyword id="KW-0949">S-adenosyl-L-methionine</keyword>
<keyword id="KW-0808">Transferase</keyword>
<proteinExistence type="inferred from homology"/>
<organism>
    <name type="scientific">Rhodopseudomonas palustris (strain ATCC BAA-98 / CGA009)</name>
    <dbReference type="NCBI Taxonomy" id="258594"/>
    <lineage>
        <taxon>Bacteria</taxon>
        <taxon>Pseudomonadati</taxon>
        <taxon>Pseudomonadota</taxon>
        <taxon>Alphaproteobacteria</taxon>
        <taxon>Hyphomicrobiales</taxon>
        <taxon>Nitrobacteraceae</taxon>
        <taxon>Rhodopseudomonas</taxon>
    </lineage>
</organism>
<comment type="function">
    <text evidence="1">Specifically methylates the guanosine in position 1516 of 16S rRNA.</text>
</comment>
<comment type="catalytic activity">
    <reaction evidence="1">
        <text>guanosine(1516) in 16S rRNA + S-adenosyl-L-methionine = N(2)-methylguanosine(1516) in 16S rRNA + S-adenosyl-L-homocysteine + H(+)</text>
        <dbReference type="Rhea" id="RHEA:43220"/>
        <dbReference type="Rhea" id="RHEA-COMP:10412"/>
        <dbReference type="Rhea" id="RHEA-COMP:10413"/>
        <dbReference type="ChEBI" id="CHEBI:15378"/>
        <dbReference type="ChEBI" id="CHEBI:57856"/>
        <dbReference type="ChEBI" id="CHEBI:59789"/>
        <dbReference type="ChEBI" id="CHEBI:74269"/>
        <dbReference type="ChEBI" id="CHEBI:74481"/>
        <dbReference type="EC" id="2.1.1.242"/>
    </reaction>
</comment>
<comment type="subcellular location">
    <subcellularLocation>
        <location evidence="1">Cytoplasm</location>
    </subcellularLocation>
</comment>
<comment type="similarity">
    <text evidence="1">Belongs to the methyltransferase superfamily. RsmJ family.</text>
</comment>
<sequence length="204" mass="21691">MAETARTAPAVDFVGGAVGYRFRSQAGRSHALLKATGLSPTRSLHVIDATAGLGRDAFLLASMGATVTLIERVPEVHALLAEALEAARAESDELAAIIGRMTLLHGDARVLLPTLQADVITIDPMHPPRTKTALVKQEMRLLRDLVGADPDVGELLAAALSADCGRVVLKWPLRAAAPPAARKPSHQIAGKTVRYDVYVRPRTT</sequence>
<evidence type="ECO:0000255" key="1">
    <source>
        <dbReference type="HAMAP-Rule" id="MF_01523"/>
    </source>
</evidence>
<reference key="1">
    <citation type="journal article" date="2004" name="Nat. Biotechnol.">
        <title>Complete genome sequence of the metabolically versatile photosynthetic bacterium Rhodopseudomonas palustris.</title>
        <authorList>
            <person name="Larimer F.W."/>
            <person name="Chain P."/>
            <person name="Hauser L."/>
            <person name="Lamerdin J.E."/>
            <person name="Malfatti S."/>
            <person name="Do L."/>
            <person name="Land M.L."/>
            <person name="Pelletier D.A."/>
            <person name="Beatty J.T."/>
            <person name="Lang A.S."/>
            <person name="Tabita F.R."/>
            <person name="Gibson J.L."/>
            <person name="Hanson T.E."/>
            <person name="Bobst C."/>
            <person name="Torres y Torres J.L."/>
            <person name="Peres C."/>
            <person name="Harrison F.H."/>
            <person name="Gibson J."/>
            <person name="Harwood C.S."/>
        </authorList>
    </citation>
    <scope>NUCLEOTIDE SEQUENCE [LARGE SCALE GENOMIC DNA]</scope>
    <source>
        <strain>ATCC BAA-98 / CGA009</strain>
    </source>
</reference>
<gene>
    <name evidence="1" type="primary">rsmJ</name>
    <name type="ordered locus">RPA3487</name>
</gene>